<feature type="chain" id="PRO_0000100464" description="Phosphoribosylformylglycinamidine synthase subunit PurL">
    <location>
        <begin position="1"/>
        <end position="772"/>
    </location>
</feature>
<feature type="active site" evidence="1">
    <location>
        <position position="62"/>
    </location>
</feature>
<feature type="active site" description="Proton acceptor" evidence="1">
    <location>
        <position position="113"/>
    </location>
</feature>
<feature type="binding site" evidence="1">
    <location>
        <position position="65"/>
    </location>
    <ligand>
        <name>ATP</name>
        <dbReference type="ChEBI" id="CHEBI:30616"/>
    </ligand>
</feature>
<feature type="binding site" evidence="1">
    <location>
        <position position="109"/>
    </location>
    <ligand>
        <name>ATP</name>
        <dbReference type="ChEBI" id="CHEBI:30616"/>
    </ligand>
</feature>
<feature type="binding site" evidence="1">
    <location>
        <position position="111"/>
    </location>
    <ligand>
        <name>Mg(2+)</name>
        <dbReference type="ChEBI" id="CHEBI:18420"/>
        <label>1</label>
    </ligand>
</feature>
<feature type="binding site" evidence="1">
    <location>
        <begin position="112"/>
        <end position="115"/>
    </location>
    <ligand>
        <name>substrate</name>
    </ligand>
</feature>
<feature type="binding site" evidence="1">
    <location>
        <position position="134"/>
    </location>
    <ligand>
        <name>substrate</name>
    </ligand>
</feature>
<feature type="binding site" evidence="1">
    <location>
        <position position="135"/>
    </location>
    <ligand>
        <name>Mg(2+)</name>
        <dbReference type="ChEBI" id="CHEBI:18420"/>
        <label>2</label>
    </ligand>
</feature>
<feature type="binding site" evidence="1">
    <location>
        <position position="259"/>
    </location>
    <ligand>
        <name>substrate</name>
    </ligand>
</feature>
<feature type="binding site" evidence="1">
    <location>
        <position position="287"/>
    </location>
    <ligand>
        <name>Mg(2+)</name>
        <dbReference type="ChEBI" id="CHEBI:18420"/>
        <label>2</label>
    </ligand>
</feature>
<feature type="binding site" evidence="1">
    <location>
        <begin position="331"/>
        <end position="333"/>
    </location>
    <ligand>
        <name>substrate</name>
    </ligand>
</feature>
<feature type="binding site" evidence="1">
    <location>
        <position position="519"/>
    </location>
    <ligand>
        <name>ATP</name>
        <dbReference type="ChEBI" id="CHEBI:30616"/>
    </ligand>
</feature>
<feature type="binding site" evidence="1">
    <location>
        <position position="556"/>
    </location>
    <ligand>
        <name>ATP</name>
        <dbReference type="ChEBI" id="CHEBI:30616"/>
    </ligand>
</feature>
<feature type="binding site" evidence="1">
    <location>
        <position position="557"/>
    </location>
    <ligand>
        <name>Mg(2+)</name>
        <dbReference type="ChEBI" id="CHEBI:18420"/>
        <label>1</label>
    </ligand>
</feature>
<feature type="binding site" evidence="1">
    <location>
        <position position="559"/>
    </location>
    <ligand>
        <name>substrate</name>
    </ligand>
</feature>
<comment type="function">
    <text evidence="1">Part of the phosphoribosylformylglycinamidine synthase complex involved in the purines biosynthetic pathway. Catalyzes the ATP-dependent conversion of formylglycinamide ribonucleotide (FGAR) and glutamine to yield formylglycinamidine ribonucleotide (FGAM) and glutamate. The FGAM synthase complex is composed of three subunits. PurQ produces an ammonia molecule by converting glutamine to glutamate. PurL transfers the ammonia molecule to FGAR to form FGAM in an ATP-dependent manner. PurS interacts with PurQ and PurL and is thought to assist in the transfer of the ammonia molecule from PurQ to PurL.</text>
</comment>
<comment type="catalytic activity">
    <reaction evidence="1">
        <text>N(2)-formyl-N(1)-(5-phospho-beta-D-ribosyl)glycinamide + L-glutamine + ATP + H2O = 2-formamido-N(1)-(5-O-phospho-beta-D-ribosyl)acetamidine + L-glutamate + ADP + phosphate + H(+)</text>
        <dbReference type="Rhea" id="RHEA:17129"/>
        <dbReference type="ChEBI" id="CHEBI:15377"/>
        <dbReference type="ChEBI" id="CHEBI:15378"/>
        <dbReference type="ChEBI" id="CHEBI:29985"/>
        <dbReference type="ChEBI" id="CHEBI:30616"/>
        <dbReference type="ChEBI" id="CHEBI:43474"/>
        <dbReference type="ChEBI" id="CHEBI:58359"/>
        <dbReference type="ChEBI" id="CHEBI:147286"/>
        <dbReference type="ChEBI" id="CHEBI:147287"/>
        <dbReference type="ChEBI" id="CHEBI:456216"/>
        <dbReference type="EC" id="6.3.5.3"/>
    </reaction>
</comment>
<comment type="pathway">
    <text evidence="1">Purine metabolism; IMP biosynthesis via de novo pathway; 5-amino-1-(5-phospho-D-ribosyl)imidazole from N(2)-formyl-N(1)-(5-phospho-D-ribosyl)glycinamide: step 1/2.</text>
</comment>
<comment type="subunit">
    <text evidence="1">Monomer. Part of the FGAM synthase complex composed of 1 PurL, 1 PurQ and 2 PurS subunits.</text>
</comment>
<comment type="subcellular location">
    <subcellularLocation>
        <location evidence="1">Cytoplasm</location>
    </subcellularLocation>
</comment>
<comment type="similarity">
    <text evidence="1">Belongs to the FGAMS family.</text>
</comment>
<reference key="1">
    <citation type="journal article" date="2004" name="Mol. Plant Microbe Interact.">
        <title>The genome sequence of the Gram-positive sugarcane pathogen Leifsonia xyli subsp. xyli.</title>
        <authorList>
            <person name="Monteiro-Vitorello C.B."/>
            <person name="Camargo L.E.A."/>
            <person name="Van Sluys M.A."/>
            <person name="Kitajima J.P."/>
            <person name="Truffi D."/>
            <person name="do Amaral A.M."/>
            <person name="Harakava R."/>
            <person name="de Oliveira J.C.F."/>
            <person name="Wood D."/>
            <person name="de Oliveira M.C."/>
            <person name="Miyaki C.Y."/>
            <person name="Takita M.A."/>
            <person name="da Silva A.C.R."/>
            <person name="Furlan L.R."/>
            <person name="Carraro D.M."/>
            <person name="Camarotte G."/>
            <person name="Almeida N.F. Jr."/>
            <person name="Carrer H."/>
            <person name="Coutinho L.L."/>
            <person name="El-Dorry H.A."/>
            <person name="Ferro M.I.T."/>
            <person name="Gagliardi P.R."/>
            <person name="Giglioti E."/>
            <person name="Goldman M.H.S."/>
            <person name="Goldman G.H."/>
            <person name="Kimura E.T."/>
            <person name="Ferro E.S."/>
            <person name="Kuramae E.E."/>
            <person name="Lemos E.G.M."/>
            <person name="Lemos M.V.F."/>
            <person name="Mauro S.M.Z."/>
            <person name="Machado M.A."/>
            <person name="Marino C.L."/>
            <person name="Menck C.F."/>
            <person name="Nunes L.R."/>
            <person name="Oliveira R.C."/>
            <person name="Pereira G.G."/>
            <person name="Siqueira W."/>
            <person name="de Souza A.A."/>
            <person name="Tsai S.M."/>
            <person name="Zanca A.S."/>
            <person name="Simpson A.J.G."/>
            <person name="Brumbley S.M."/>
            <person name="Setubal J.C."/>
        </authorList>
    </citation>
    <scope>NUCLEOTIDE SEQUENCE [LARGE SCALE GENOMIC DNA]</scope>
    <source>
        <strain>CTCB07</strain>
    </source>
</reference>
<dbReference type="EC" id="6.3.5.3" evidence="1"/>
<dbReference type="EMBL" id="AE016822">
    <property type="protein sequence ID" value="AAT89970.1"/>
    <property type="molecule type" value="Genomic_DNA"/>
</dbReference>
<dbReference type="RefSeq" id="WP_011186949.1">
    <property type="nucleotide sequence ID" value="NC_006087.1"/>
</dbReference>
<dbReference type="SMR" id="Q6ACC3"/>
<dbReference type="STRING" id="281090.Lxx23140"/>
<dbReference type="KEGG" id="lxx:Lxx23140"/>
<dbReference type="eggNOG" id="COG0046">
    <property type="taxonomic scope" value="Bacteria"/>
</dbReference>
<dbReference type="HOGENOM" id="CLU_003100_0_1_11"/>
<dbReference type="UniPathway" id="UPA00074">
    <property type="reaction ID" value="UER00128"/>
</dbReference>
<dbReference type="Proteomes" id="UP000001306">
    <property type="component" value="Chromosome"/>
</dbReference>
<dbReference type="GO" id="GO:0005737">
    <property type="term" value="C:cytoplasm"/>
    <property type="evidence" value="ECO:0007669"/>
    <property type="project" value="UniProtKB-SubCell"/>
</dbReference>
<dbReference type="GO" id="GO:0005524">
    <property type="term" value="F:ATP binding"/>
    <property type="evidence" value="ECO:0007669"/>
    <property type="project" value="UniProtKB-UniRule"/>
</dbReference>
<dbReference type="GO" id="GO:0000287">
    <property type="term" value="F:magnesium ion binding"/>
    <property type="evidence" value="ECO:0007669"/>
    <property type="project" value="UniProtKB-UniRule"/>
</dbReference>
<dbReference type="GO" id="GO:0004642">
    <property type="term" value="F:phosphoribosylformylglycinamidine synthase activity"/>
    <property type="evidence" value="ECO:0007669"/>
    <property type="project" value="UniProtKB-UniRule"/>
</dbReference>
<dbReference type="GO" id="GO:0006189">
    <property type="term" value="P:'de novo' IMP biosynthetic process"/>
    <property type="evidence" value="ECO:0007669"/>
    <property type="project" value="UniProtKB-UniRule"/>
</dbReference>
<dbReference type="CDD" id="cd02203">
    <property type="entry name" value="PurL_repeat1"/>
    <property type="match status" value="1"/>
</dbReference>
<dbReference type="CDD" id="cd02204">
    <property type="entry name" value="PurL_repeat2"/>
    <property type="match status" value="1"/>
</dbReference>
<dbReference type="FunFam" id="3.30.1330.10:FF:000004">
    <property type="entry name" value="Phosphoribosylformylglycinamidine synthase subunit PurL"/>
    <property type="match status" value="1"/>
</dbReference>
<dbReference type="Gene3D" id="3.90.650.10">
    <property type="entry name" value="PurM-like C-terminal domain"/>
    <property type="match status" value="2"/>
</dbReference>
<dbReference type="Gene3D" id="3.30.1330.10">
    <property type="entry name" value="PurM-like, N-terminal domain"/>
    <property type="match status" value="2"/>
</dbReference>
<dbReference type="HAMAP" id="MF_00420">
    <property type="entry name" value="PurL_2"/>
    <property type="match status" value="1"/>
</dbReference>
<dbReference type="InterPro" id="IPR010074">
    <property type="entry name" value="PRibForGlyAmidine_synth_PurL"/>
</dbReference>
<dbReference type="InterPro" id="IPR041609">
    <property type="entry name" value="PurL_linker"/>
</dbReference>
<dbReference type="InterPro" id="IPR010918">
    <property type="entry name" value="PurM-like_C_dom"/>
</dbReference>
<dbReference type="InterPro" id="IPR036676">
    <property type="entry name" value="PurM-like_C_sf"/>
</dbReference>
<dbReference type="InterPro" id="IPR016188">
    <property type="entry name" value="PurM-like_N"/>
</dbReference>
<dbReference type="InterPro" id="IPR036921">
    <property type="entry name" value="PurM-like_N_sf"/>
</dbReference>
<dbReference type="NCBIfam" id="TIGR01736">
    <property type="entry name" value="FGAM_synth_II"/>
    <property type="match status" value="1"/>
</dbReference>
<dbReference type="NCBIfam" id="NF002290">
    <property type="entry name" value="PRK01213.1"/>
    <property type="match status" value="1"/>
</dbReference>
<dbReference type="PANTHER" id="PTHR43555">
    <property type="entry name" value="PHOSPHORIBOSYLFORMYLGLYCINAMIDINE SYNTHASE SUBUNIT PURL"/>
    <property type="match status" value="1"/>
</dbReference>
<dbReference type="PANTHER" id="PTHR43555:SF1">
    <property type="entry name" value="PHOSPHORIBOSYLFORMYLGLYCINAMIDINE SYNTHASE SUBUNIT PURL"/>
    <property type="match status" value="1"/>
</dbReference>
<dbReference type="Pfam" id="PF00586">
    <property type="entry name" value="AIRS"/>
    <property type="match status" value="2"/>
</dbReference>
<dbReference type="Pfam" id="PF02769">
    <property type="entry name" value="AIRS_C"/>
    <property type="match status" value="2"/>
</dbReference>
<dbReference type="Pfam" id="PF18072">
    <property type="entry name" value="FGAR-AT_linker"/>
    <property type="match status" value="1"/>
</dbReference>
<dbReference type="PIRSF" id="PIRSF001587">
    <property type="entry name" value="FGAM_synthase_II"/>
    <property type="match status" value="1"/>
</dbReference>
<dbReference type="SUPFAM" id="SSF56042">
    <property type="entry name" value="PurM C-terminal domain-like"/>
    <property type="match status" value="2"/>
</dbReference>
<dbReference type="SUPFAM" id="SSF55326">
    <property type="entry name" value="PurM N-terminal domain-like"/>
    <property type="match status" value="2"/>
</dbReference>
<evidence type="ECO:0000255" key="1">
    <source>
        <dbReference type="HAMAP-Rule" id="MF_00420"/>
    </source>
</evidence>
<sequence>MTDTTAQHVVDTVANAAATPEREQPFAALGLKPDEYASIREILGRRPTNGELAMYSVMWSEHCSYKSSKIYLRQFGQKVTPAMKKNLMVGMGENAGVVDIGEGWAVTFKVESHNHPSYIEPFQGAATGVGGIVRDIISMGARPVAVMDQLRFGAIDEPDTAHVVHGVVSGISFYGNCLGLPNIGGETYFDPVYQGNPLVNALSVGVLRHEDLHLANASGVGNKVVLFGARTGGDGIGGASILASDTFSEGGPTKRPAVQVGDPFAEKVLIECCLELYRDKLVEGIQDLGAAGISCATSELASNGDGGMFIELDSVLLRDPSLTAEEILMSESQERMMAVVKPELLDQFLAVTAKWDVETSVLGEVTGTGRLVINWHGEEIANVDPRTVAIDGPVYERPVAYPSWIDALRADSASALALPVSGDALREQALALLGSANLADKSWITDQYDYFVGGNTALAFPDDAGMIRVDEESGLGFAIATDANGRYCQLDPKEGAKLALAEAYRNVAASGAVPAAVTDCLNFGSPENPEVMWQFSQAVEGLSDACLELGIPVTGGNVSFYNQTGDVPIFPTPVVGVLGVIDDVARRIPAGWQDEGENIYLLGITREELDGSAWAATVHGHLGGRPPAVDLAAERRLAETLHAASQQGLISSAHDLADGGLAQALTESVLRFGVGARVWLGDIAERDGVDAASALFSESTARAIVSVPREDDVKFRGLCDGRGVPALRIGVTDAGAGTEPVLEIQDLFAIEVAELRSVHRSTLAERFGPVVG</sequence>
<name>PURL_LEIXX</name>
<gene>
    <name evidence="1" type="primary">purL</name>
    <name type="ordered locus">Lxx23140</name>
</gene>
<accession>Q6ACC3</accession>
<proteinExistence type="inferred from homology"/>
<keyword id="KW-0067">ATP-binding</keyword>
<keyword id="KW-0963">Cytoplasm</keyword>
<keyword id="KW-0436">Ligase</keyword>
<keyword id="KW-0460">Magnesium</keyword>
<keyword id="KW-0479">Metal-binding</keyword>
<keyword id="KW-0547">Nucleotide-binding</keyword>
<keyword id="KW-0658">Purine biosynthesis</keyword>
<keyword id="KW-1185">Reference proteome</keyword>
<protein>
    <recommendedName>
        <fullName evidence="1">Phosphoribosylformylglycinamidine synthase subunit PurL</fullName>
        <shortName evidence="1">FGAM synthase</shortName>
        <ecNumber evidence="1">6.3.5.3</ecNumber>
    </recommendedName>
    <alternativeName>
        <fullName evidence="1">Formylglycinamide ribonucleotide amidotransferase subunit II</fullName>
        <shortName evidence="1">FGAR amidotransferase II</shortName>
        <shortName evidence="1">FGAR-AT II</shortName>
    </alternativeName>
    <alternativeName>
        <fullName evidence="1">Glutamine amidotransferase PurL</fullName>
    </alternativeName>
    <alternativeName>
        <fullName evidence="1">Phosphoribosylformylglycinamidine synthase subunit II</fullName>
    </alternativeName>
</protein>
<organism>
    <name type="scientific">Leifsonia xyli subsp. xyli (strain CTCB07)</name>
    <dbReference type="NCBI Taxonomy" id="281090"/>
    <lineage>
        <taxon>Bacteria</taxon>
        <taxon>Bacillati</taxon>
        <taxon>Actinomycetota</taxon>
        <taxon>Actinomycetes</taxon>
        <taxon>Micrococcales</taxon>
        <taxon>Microbacteriaceae</taxon>
        <taxon>Leifsonia</taxon>
    </lineage>
</organism>